<keyword id="KW-0903">Direct protein sequencing</keyword>
<protein>
    <recommendedName>
        <fullName>Vegetative protein 6</fullName>
        <shortName>VEG6</shortName>
    </recommendedName>
</protein>
<proteinExistence type="evidence at protein level"/>
<organism>
    <name type="scientific">Bacillus subtilis</name>
    <dbReference type="NCBI Taxonomy" id="1423"/>
    <lineage>
        <taxon>Bacteria</taxon>
        <taxon>Bacillati</taxon>
        <taxon>Bacillota</taxon>
        <taxon>Bacilli</taxon>
        <taxon>Bacillales</taxon>
        <taxon>Bacillaceae</taxon>
        <taxon>Bacillus</taxon>
    </lineage>
</organism>
<reference key="1">
    <citation type="journal article" date="1997" name="Microbiology">
        <title>Identification of vegetative proteins for a two-dimensional protein index of Bacillus subtilis.</title>
        <authorList>
            <person name="Schmid R."/>
            <person name="Bernhardt J."/>
            <person name="Antelmann H."/>
            <person name="Voelker U."/>
            <person name="Mach H."/>
            <person name="Voelker A."/>
            <person name="Hecker M."/>
        </authorList>
    </citation>
    <scope>PROTEIN SEQUENCE</scope>
    <source>
        <strain>168 / IS58</strain>
    </source>
</reference>
<accession>P80699</accession>
<feature type="chain" id="PRO_0000050084" description="Vegetative protein 6">
    <location>
        <begin position="1"/>
        <end position="10" status="greater than"/>
    </location>
</feature>
<feature type="non-terminal residue">
    <location>
        <position position="10"/>
    </location>
</feature>
<name>VEG6_BACIU</name>
<sequence>LGTGLGVDQN</sequence>